<keyword id="KW-0963">Cytoplasm</keyword>
<keyword id="KW-0378">Hydrolase</keyword>
<keyword id="KW-0460">Magnesium</keyword>
<keyword id="KW-0479">Metal-binding</keyword>
<keyword id="KW-1185">Reference proteome</keyword>
<evidence type="ECO:0000250" key="1"/>
<evidence type="ECO:0000305" key="2"/>
<accession>Q6MVH7</accession>
<accession>Q7SGH1</accession>
<protein>
    <recommendedName>
        <fullName>Inorganic pyrophosphatase</fullName>
        <ecNumber>3.6.1.1</ecNumber>
    </recommendedName>
    <alternativeName>
        <fullName>Pyrophosphate phospho-hydrolase</fullName>
        <shortName>PPase</shortName>
    </alternativeName>
</protein>
<gene>
    <name type="primary">ipp-1</name>
    <name type="ORF">B20J13.020</name>
    <name type="ORF">NCU00951</name>
</gene>
<comment type="catalytic activity">
    <reaction>
        <text>diphosphate + H2O = 2 phosphate + H(+)</text>
        <dbReference type="Rhea" id="RHEA:24576"/>
        <dbReference type="ChEBI" id="CHEBI:15377"/>
        <dbReference type="ChEBI" id="CHEBI:15378"/>
        <dbReference type="ChEBI" id="CHEBI:33019"/>
        <dbReference type="ChEBI" id="CHEBI:43474"/>
        <dbReference type="EC" id="3.6.1.1"/>
    </reaction>
</comment>
<comment type="cofactor">
    <cofactor evidence="1">
        <name>Mg(2+)</name>
        <dbReference type="ChEBI" id="CHEBI:18420"/>
    </cofactor>
</comment>
<comment type="subcellular location">
    <subcellularLocation>
        <location evidence="1">Cytoplasm</location>
    </subcellularLocation>
</comment>
<comment type="similarity">
    <text evidence="2">Belongs to the PPase family.</text>
</comment>
<comment type="sequence caution" evidence="2">
    <conflict type="erroneous initiation">
        <sequence resource="EMBL-CDS" id="EAA35908"/>
    </conflict>
    <text>Extended N-terminus.</text>
</comment>
<name>IPYR_NEUCR</name>
<organism>
    <name type="scientific">Neurospora crassa (strain ATCC 24698 / 74-OR23-1A / CBS 708.71 / DSM 1257 / FGSC 987)</name>
    <dbReference type="NCBI Taxonomy" id="367110"/>
    <lineage>
        <taxon>Eukaryota</taxon>
        <taxon>Fungi</taxon>
        <taxon>Dikarya</taxon>
        <taxon>Ascomycota</taxon>
        <taxon>Pezizomycotina</taxon>
        <taxon>Sordariomycetes</taxon>
        <taxon>Sordariomycetidae</taxon>
        <taxon>Sordariales</taxon>
        <taxon>Sordariaceae</taxon>
        <taxon>Neurospora</taxon>
    </lineage>
</organism>
<dbReference type="EC" id="3.6.1.1"/>
<dbReference type="EMBL" id="BX842629">
    <property type="protein sequence ID" value="CAE76321.1"/>
    <property type="molecule type" value="Genomic_DNA"/>
</dbReference>
<dbReference type="EMBL" id="CM002236">
    <property type="protein sequence ID" value="EAA35908.3"/>
    <property type="status" value="ALT_INIT"/>
    <property type="molecule type" value="Genomic_DNA"/>
</dbReference>
<dbReference type="RefSeq" id="XP_965144.3">
    <property type="nucleotide sequence ID" value="XM_960051.3"/>
</dbReference>
<dbReference type="SMR" id="Q6MVH7"/>
<dbReference type="FunCoup" id="Q6MVH7">
    <property type="interactions" value="962"/>
</dbReference>
<dbReference type="STRING" id="367110.Q6MVH7"/>
<dbReference type="PaxDb" id="5141-EFNCRP00000000572"/>
<dbReference type="EnsemblFungi" id="EAA35908">
    <property type="protein sequence ID" value="EAA35908"/>
    <property type="gene ID" value="NCU00951"/>
</dbReference>
<dbReference type="GeneID" id="3881296"/>
<dbReference type="KEGG" id="ncr:NCU00951"/>
<dbReference type="HOGENOM" id="CLU_040684_0_1_1"/>
<dbReference type="InParanoid" id="Q6MVH7"/>
<dbReference type="OrthoDB" id="1608002at2759"/>
<dbReference type="Proteomes" id="UP000001805">
    <property type="component" value="Chromosome 1, Linkage Group I"/>
</dbReference>
<dbReference type="GO" id="GO:0005737">
    <property type="term" value="C:cytoplasm"/>
    <property type="evidence" value="ECO:0007669"/>
    <property type="project" value="UniProtKB-SubCell"/>
</dbReference>
<dbReference type="GO" id="GO:0004427">
    <property type="term" value="F:inorganic diphosphate phosphatase activity"/>
    <property type="evidence" value="ECO:0000318"/>
    <property type="project" value="GO_Central"/>
</dbReference>
<dbReference type="GO" id="GO:0000287">
    <property type="term" value="F:magnesium ion binding"/>
    <property type="evidence" value="ECO:0007669"/>
    <property type="project" value="InterPro"/>
</dbReference>
<dbReference type="GO" id="GO:0006796">
    <property type="term" value="P:phosphate-containing compound metabolic process"/>
    <property type="evidence" value="ECO:0000318"/>
    <property type="project" value="GO_Central"/>
</dbReference>
<dbReference type="CDD" id="cd00412">
    <property type="entry name" value="pyrophosphatase"/>
    <property type="match status" value="1"/>
</dbReference>
<dbReference type="FunFam" id="3.90.80.10:FF:000004">
    <property type="entry name" value="Inorganic pyrophosphatase"/>
    <property type="match status" value="1"/>
</dbReference>
<dbReference type="Gene3D" id="3.90.80.10">
    <property type="entry name" value="Inorganic pyrophosphatase"/>
    <property type="match status" value="1"/>
</dbReference>
<dbReference type="InterPro" id="IPR008162">
    <property type="entry name" value="Pyrophosphatase"/>
</dbReference>
<dbReference type="InterPro" id="IPR036649">
    <property type="entry name" value="Pyrophosphatase_sf"/>
</dbReference>
<dbReference type="PANTHER" id="PTHR10286">
    <property type="entry name" value="INORGANIC PYROPHOSPHATASE"/>
    <property type="match status" value="1"/>
</dbReference>
<dbReference type="Pfam" id="PF00719">
    <property type="entry name" value="Pyrophosphatase"/>
    <property type="match status" value="1"/>
</dbReference>
<dbReference type="SUPFAM" id="SSF50324">
    <property type="entry name" value="Inorganic pyrophosphatase"/>
    <property type="match status" value="1"/>
</dbReference>
<dbReference type="PROSITE" id="PS00387">
    <property type="entry name" value="PPASE"/>
    <property type="match status" value="1"/>
</dbReference>
<reference key="1">
    <citation type="journal article" date="2003" name="Nucleic Acids Res.">
        <title>What's in the genome of a filamentous fungus? Analysis of the Neurospora genome sequence.</title>
        <authorList>
            <person name="Mannhaupt G."/>
            <person name="Montrone C."/>
            <person name="Haase D."/>
            <person name="Mewes H.-W."/>
            <person name="Aign V."/>
            <person name="Hoheisel J.D."/>
            <person name="Fartmann B."/>
            <person name="Nyakatura G."/>
            <person name="Kempken F."/>
            <person name="Maier J."/>
            <person name="Schulte U."/>
        </authorList>
    </citation>
    <scope>NUCLEOTIDE SEQUENCE [LARGE SCALE GENOMIC DNA]</scope>
    <source>
        <strain>ATCC 24698 / 74-OR23-1A / CBS 708.71 / DSM 1257 / FGSC 987</strain>
    </source>
</reference>
<reference key="2">
    <citation type="journal article" date="2003" name="Nature">
        <title>The genome sequence of the filamentous fungus Neurospora crassa.</title>
        <authorList>
            <person name="Galagan J.E."/>
            <person name="Calvo S.E."/>
            <person name="Borkovich K.A."/>
            <person name="Selker E.U."/>
            <person name="Read N.D."/>
            <person name="Jaffe D.B."/>
            <person name="FitzHugh W."/>
            <person name="Ma L.-J."/>
            <person name="Smirnov S."/>
            <person name="Purcell S."/>
            <person name="Rehman B."/>
            <person name="Elkins T."/>
            <person name="Engels R."/>
            <person name="Wang S."/>
            <person name="Nielsen C.B."/>
            <person name="Butler J."/>
            <person name="Endrizzi M."/>
            <person name="Qui D."/>
            <person name="Ianakiev P."/>
            <person name="Bell-Pedersen D."/>
            <person name="Nelson M.A."/>
            <person name="Werner-Washburne M."/>
            <person name="Selitrennikoff C.P."/>
            <person name="Kinsey J.A."/>
            <person name="Braun E.L."/>
            <person name="Zelter A."/>
            <person name="Schulte U."/>
            <person name="Kothe G.O."/>
            <person name="Jedd G."/>
            <person name="Mewes H.-W."/>
            <person name="Staben C."/>
            <person name="Marcotte E."/>
            <person name="Greenberg D."/>
            <person name="Roy A."/>
            <person name="Foley K."/>
            <person name="Naylor J."/>
            <person name="Stange-Thomann N."/>
            <person name="Barrett R."/>
            <person name="Gnerre S."/>
            <person name="Kamal M."/>
            <person name="Kamvysselis M."/>
            <person name="Mauceli E.W."/>
            <person name="Bielke C."/>
            <person name="Rudd S."/>
            <person name="Frishman D."/>
            <person name="Krystofova S."/>
            <person name="Rasmussen C."/>
            <person name="Metzenberg R.L."/>
            <person name="Perkins D.D."/>
            <person name="Kroken S."/>
            <person name="Cogoni C."/>
            <person name="Macino G."/>
            <person name="Catcheside D.E.A."/>
            <person name="Li W."/>
            <person name="Pratt R.J."/>
            <person name="Osmani S.A."/>
            <person name="DeSouza C.P.C."/>
            <person name="Glass N.L."/>
            <person name="Orbach M.J."/>
            <person name="Berglund J.A."/>
            <person name="Voelker R."/>
            <person name="Yarden O."/>
            <person name="Plamann M."/>
            <person name="Seiler S."/>
            <person name="Dunlap J.C."/>
            <person name="Radford A."/>
            <person name="Aramayo R."/>
            <person name="Natvig D.O."/>
            <person name="Alex L.A."/>
            <person name="Mannhaupt G."/>
            <person name="Ebbole D.J."/>
            <person name="Freitag M."/>
            <person name="Paulsen I."/>
            <person name="Sachs M.S."/>
            <person name="Lander E.S."/>
            <person name="Nusbaum C."/>
            <person name="Birren B.W."/>
        </authorList>
    </citation>
    <scope>NUCLEOTIDE SEQUENCE [LARGE SCALE GENOMIC DNA]</scope>
    <source>
        <strain>ATCC 24698 / 74-OR23-1A / CBS 708.71 / DSM 1257 / FGSC 987</strain>
    </source>
</reference>
<sequence length="290" mass="32639">MASQYSVRKVGAPYTLEHRVYIEKDGVPVSPFHDIPLYANAEQTILNMVVEIPRWTNAKQEISKEELLNPIKQDTKKGKLRFVRNCFPHKGYLWNYGAFPQTWEDPNSIHPETKAKGDNDPLDVCEIGELVGYTGQVKQVKVLGVMALLDEEETDWKVIVIDVNDPLAPKLNDVEDVERHLPGLIRATNEWFRIYKIPDGKPENQFAFTGECKNKTYAMDVVRECNEAWERLITGKTAPGGVSTTNVTVQHSSSRVAPDQLPPLPPNENLPPAPIDSSIDKWFFISGASA</sequence>
<feature type="chain" id="PRO_0000137584" description="Inorganic pyrophosphatase">
    <location>
        <begin position="1"/>
        <end position="290"/>
    </location>
</feature>
<feature type="binding site" evidence="1">
    <location>
        <position position="81"/>
    </location>
    <ligand>
        <name>diphosphate</name>
        <dbReference type="ChEBI" id="CHEBI:33019"/>
    </ligand>
</feature>
<feature type="binding site" evidence="1">
    <location>
        <position position="118"/>
    </location>
    <ligand>
        <name>Mg(2+)</name>
        <dbReference type="ChEBI" id="CHEBI:18420"/>
        <label>1</label>
    </ligand>
</feature>
<feature type="binding site" evidence="1">
    <location>
        <position position="123"/>
    </location>
    <ligand>
        <name>Mg(2+)</name>
        <dbReference type="ChEBI" id="CHEBI:18420"/>
        <label>1</label>
    </ligand>
</feature>
<feature type="binding site" evidence="1">
    <location>
        <position position="123"/>
    </location>
    <ligand>
        <name>Mg(2+)</name>
        <dbReference type="ChEBI" id="CHEBI:18420"/>
        <label>2</label>
    </ligand>
</feature>
<feature type="binding site" evidence="1">
    <location>
        <position position="155"/>
    </location>
    <ligand>
        <name>Mg(2+)</name>
        <dbReference type="ChEBI" id="CHEBI:18420"/>
        <label>1</label>
    </ligand>
</feature>
<proteinExistence type="inferred from homology"/>